<sequence>MKIAEIKELATKELQERLDAEVAAYDQMRINHAVSPLDSPAKLKHQRRMIAQMKTVLRQRELNK</sequence>
<dbReference type="EMBL" id="AE015924">
    <property type="protein sequence ID" value="AAQ66911.1"/>
    <property type="molecule type" value="Genomic_DNA"/>
</dbReference>
<dbReference type="RefSeq" id="WP_004583590.1">
    <property type="nucleotide sequence ID" value="NC_002950.2"/>
</dbReference>
<dbReference type="SMR" id="Q7MTM1"/>
<dbReference type="STRING" id="242619.PG_1930"/>
<dbReference type="EnsemblBacteria" id="AAQ66911">
    <property type="protein sequence ID" value="AAQ66911"/>
    <property type="gene ID" value="PG_1930"/>
</dbReference>
<dbReference type="GeneID" id="29257011"/>
<dbReference type="GeneID" id="57239588"/>
<dbReference type="KEGG" id="pgi:PG_1930"/>
<dbReference type="eggNOG" id="COG0255">
    <property type="taxonomic scope" value="Bacteria"/>
</dbReference>
<dbReference type="HOGENOM" id="CLU_158491_5_1_10"/>
<dbReference type="Proteomes" id="UP000000588">
    <property type="component" value="Chromosome"/>
</dbReference>
<dbReference type="GO" id="GO:1990904">
    <property type="term" value="C:ribonucleoprotein complex"/>
    <property type="evidence" value="ECO:0007669"/>
    <property type="project" value="UniProtKB-KW"/>
</dbReference>
<dbReference type="GO" id="GO:0005840">
    <property type="term" value="C:ribosome"/>
    <property type="evidence" value="ECO:0007669"/>
    <property type="project" value="UniProtKB-KW"/>
</dbReference>
<dbReference type="GO" id="GO:0003735">
    <property type="term" value="F:structural constituent of ribosome"/>
    <property type="evidence" value="ECO:0007669"/>
    <property type="project" value="InterPro"/>
</dbReference>
<dbReference type="GO" id="GO:0006412">
    <property type="term" value="P:translation"/>
    <property type="evidence" value="ECO:0007669"/>
    <property type="project" value="UniProtKB-UniRule"/>
</dbReference>
<dbReference type="CDD" id="cd00427">
    <property type="entry name" value="Ribosomal_L29_HIP"/>
    <property type="match status" value="1"/>
</dbReference>
<dbReference type="Gene3D" id="1.10.287.310">
    <property type="match status" value="1"/>
</dbReference>
<dbReference type="HAMAP" id="MF_00374">
    <property type="entry name" value="Ribosomal_uL29"/>
    <property type="match status" value="1"/>
</dbReference>
<dbReference type="InterPro" id="IPR001854">
    <property type="entry name" value="Ribosomal_uL29"/>
</dbReference>
<dbReference type="InterPro" id="IPR036049">
    <property type="entry name" value="Ribosomal_uL29_sf"/>
</dbReference>
<dbReference type="NCBIfam" id="TIGR00012">
    <property type="entry name" value="L29"/>
    <property type="match status" value="1"/>
</dbReference>
<dbReference type="Pfam" id="PF00831">
    <property type="entry name" value="Ribosomal_L29"/>
    <property type="match status" value="1"/>
</dbReference>
<dbReference type="SUPFAM" id="SSF46561">
    <property type="entry name" value="Ribosomal protein L29 (L29p)"/>
    <property type="match status" value="1"/>
</dbReference>
<organism>
    <name type="scientific">Porphyromonas gingivalis (strain ATCC BAA-308 / W83)</name>
    <dbReference type="NCBI Taxonomy" id="242619"/>
    <lineage>
        <taxon>Bacteria</taxon>
        <taxon>Pseudomonadati</taxon>
        <taxon>Bacteroidota</taxon>
        <taxon>Bacteroidia</taxon>
        <taxon>Bacteroidales</taxon>
        <taxon>Porphyromonadaceae</taxon>
        <taxon>Porphyromonas</taxon>
    </lineage>
</organism>
<accession>Q7MTM1</accession>
<name>RL29_PORGI</name>
<feature type="chain" id="PRO_1000007551" description="Large ribosomal subunit protein uL29">
    <location>
        <begin position="1"/>
        <end position="64"/>
    </location>
</feature>
<gene>
    <name evidence="1" type="primary">rpmC</name>
    <name type="ordered locus">PG_1930</name>
</gene>
<proteinExistence type="inferred from homology"/>
<protein>
    <recommendedName>
        <fullName evidence="1">Large ribosomal subunit protein uL29</fullName>
    </recommendedName>
    <alternativeName>
        <fullName evidence="2">50S ribosomal protein L29</fullName>
    </alternativeName>
</protein>
<comment type="similarity">
    <text evidence="1">Belongs to the universal ribosomal protein uL29 family.</text>
</comment>
<keyword id="KW-1185">Reference proteome</keyword>
<keyword id="KW-0687">Ribonucleoprotein</keyword>
<keyword id="KW-0689">Ribosomal protein</keyword>
<reference key="1">
    <citation type="journal article" date="2003" name="J. Bacteriol.">
        <title>Complete genome sequence of the oral pathogenic bacterium Porphyromonas gingivalis strain W83.</title>
        <authorList>
            <person name="Nelson K.E."/>
            <person name="Fleischmann R.D."/>
            <person name="DeBoy R.T."/>
            <person name="Paulsen I.T."/>
            <person name="Fouts D.E."/>
            <person name="Eisen J.A."/>
            <person name="Daugherty S.C."/>
            <person name="Dodson R.J."/>
            <person name="Durkin A.S."/>
            <person name="Gwinn M.L."/>
            <person name="Haft D.H."/>
            <person name="Kolonay J.F."/>
            <person name="Nelson W.C."/>
            <person name="Mason T.M."/>
            <person name="Tallon L."/>
            <person name="Gray J."/>
            <person name="Granger D."/>
            <person name="Tettelin H."/>
            <person name="Dong H."/>
            <person name="Galvin J.L."/>
            <person name="Duncan M.J."/>
            <person name="Dewhirst F.E."/>
            <person name="Fraser C.M."/>
        </authorList>
    </citation>
    <scope>NUCLEOTIDE SEQUENCE [LARGE SCALE GENOMIC DNA]</scope>
    <source>
        <strain>ATCC BAA-308 / W83</strain>
    </source>
</reference>
<evidence type="ECO:0000255" key="1">
    <source>
        <dbReference type="HAMAP-Rule" id="MF_00374"/>
    </source>
</evidence>
<evidence type="ECO:0000305" key="2"/>